<keyword id="KW-0044">Antibiotic</keyword>
<keyword id="KW-0929">Antimicrobial</keyword>
<keyword id="KW-0204">Cytolysis</keyword>
<keyword id="KW-0903">Direct protein sequencing</keyword>
<keyword id="KW-0354">Hemolysis</keyword>
<keyword id="KW-0964">Secreted</keyword>
<keyword id="KW-0732">Signal</keyword>
<keyword id="KW-0800">Toxin</keyword>
<proteinExistence type="evidence at protein level"/>
<protein>
    <recommendedName>
        <fullName>M-zodatoxin-Lt8d</fullName>
        <shortName>M-ZDTX-Lt8d</shortName>
    </recommendedName>
    <alternativeName>
        <fullName evidence="5">Cytoinsectotoxin-1d</fullName>
        <shortName evidence="5">CIT-1d</shortName>
    </alternativeName>
</protein>
<feature type="signal peptide" evidence="2">
    <location>
        <begin position="1"/>
        <end position="20"/>
    </location>
</feature>
<feature type="propeptide" id="PRO_0000366077" evidence="3">
    <location>
        <begin position="21"/>
        <end position="60"/>
    </location>
</feature>
<feature type="chain" id="PRO_0000337161" description="M-zodatoxin-Lt8d">
    <location>
        <begin position="61"/>
        <end position="129"/>
    </location>
</feature>
<feature type="short sequence motif" description="Processing quadruplet motif" evidence="6">
    <location>
        <begin position="57"/>
        <end position="60"/>
    </location>
</feature>
<comment type="function">
    <text evidence="1">Insecticidal, cytolytic and antimicrobial peptide. Forms voltage-dependent, ion-permeable channels in membranes. At high concentration causes cell membrane lysis (By similarity).</text>
</comment>
<comment type="subcellular location">
    <subcellularLocation>
        <location evidence="3 4">Secreted</location>
    </subcellularLocation>
</comment>
<comment type="tissue specificity">
    <text evidence="3">Expressed by the venom gland.</text>
</comment>
<comment type="domain">
    <text evidence="1">Both the N-terminus (61-94) and the C-terminus (99-129) of the mature peptide form alpha-helices which probably disrupt target cell membranes. The linker region (95-98) probably derives from a processing quadruplet motif (PQM), found in propeptides of many zodatoxins, hinting at a fusion of two originally separate membrane-active peptides.</text>
</comment>
<comment type="PTM">
    <text evidence="6">Cleavage of the propeptide depends on the processing quadruplet motif (XXXR, with at least one of X being E).</text>
</comment>
<comment type="mass spectrometry"/>
<comment type="similarity">
    <text evidence="7">Belongs to the cationic peptide 06 (cytoinsectotoxin) family.</text>
</comment>
<organism>
    <name type="scientific">Lachesana tarabaevi</name>
    <name type="common">Spider</name>
    <dbReference type="NCBI Taxonomy" id="379576"/>
    <lineage>
        <taxon>Eukaryota</taxon>
        <taxon>Metazoa</taxon>
        <taxon>Ecdysozoa</taxon>
        <taxon>Arthropoda</taxon>
        <taxon>Chelicerata</taxon>
        <taxon>Arachnida</taxon>
        <taxon>Araneae</taxon>
        <taxon>Araneomorphae</taxon>
        <taxon>Entelegynae</taxon>
        <taxon>Entelegynae incertae sedis</taxon>
        <taxon>Zodariidae</taxon>
        <taxon>Lachesana</taxon>
    </lineage>
</organism>
<accession>P85256</accession>
<accession>B3W6I2</accession>
<evidence type="ECO:0000250" key="1">
    <source>
        <dbReference type="UniProtKB" id="P85253"/>
    </source>
</evidence>
<evidence type="ECO:0000255" key="2"/>
<evidence type="ECO:0000269" key="3">
    <source>
    </source>
</evidence>
<evidence type="ECO:0000269" key="4">
    <source>
    </source>
</evidence>
<evidence type="ECO:0000303" key="5">
    <source>
    </source>
</evidence>
<evidence type="ECO:0000303" key="6">
    <source>
    </source>
</evidence>
<evidence type="ECO:0000305" key="7"/>
<reference evidence="7" key="1">
    <citation type="journal article" date="2008" name="Biochem. J.">
        <title>Cyto-insectotoxins, a novel class of cytolytic and insecticidal peptides from spider venom.</title>
        <authorList>
            <person name="Vassilevski A.A."/>
            <person name="Kozlov S.A."/>
            <person name="Samsonova O.V."/>
            <person name="Egorova N.S."/>
            <person name="Karpunin D.V."/>
            <person name="Pluzhnikov K.A."/>
            <person name="Feofanov A.V."/>
            <person name="Grishin E.V."/>
        </authorList>
    </citation>
    <scope>NUCLEOTIDE SEQUENCE [MRNA]</scope>
    <scope>PROTEIN SEQUENCE OF 61-129</scope>
    <scope>SUBCELLULAR LOCATION</scope>
    <scope>TISSUE SPECIFICITY</scope>
    <source>
        <tissue evidence="3">Venom</tissue>
        <tissue>Venom gland</tissue>
    </source>
</reference>
<reference key="2">
    <citation type="journal article" date="2016" name="Biochem. J.">
        <title>Lachesana tarabaevi, an expert in membrane-active toxins.</title>
        <authorList>
            <person name="Kuzmenkov A.I."/>
            <person name="Sachkova M.Y."/>
            <person name="Kovalchuk S.I."/>
            <person name="Grishin E.V."/>
            <person name="Vassilevski A.A."/>
        </authorList>
    </citation>
    <scope>SUBCELLULAR LOCATION</scope>
    <scope>PQM MOTIF</scope>
    <scope>MASS SPECTROMETRY</scope>
    <source>
        <tissue evidence="6">Venom</tissue>
    </source>
</reference>
<gene>
    <name type="primary">cit 1-4</name>
</gene>
<dbReference type="EMBL" id="FM165477">
    <property type="protein sequence ID" value="CAQ63553.1"/>
    <property type="molecule type" value="mRNA"/>
</dbReference>
<dbReference type="SMR" id="P85256"/>
<dbReference type="ArachnoServer" id="AS000723">
    <property type="toxin name" value="M-zodatoxin-Lt8d"/>
</dbReference>
<dbReference type="GO" id="GO:0005576">
    <property type="term" value="C:extracellular region"/>
    <property type="evidence" value="ECO:0000250"/>
    <property type="project" value="UniProtKB"/>
</dbReference>
<dbReference type="GO" id="GO:0090729">
    <property type="term" value="F:toxin activity"/>
    <property type="evidence" value="ECO:0007669"/>
    <property type="project" value="UniProtKB-KW"/>
</dbReference>
<dbReference type="GO" id="GO:0050829">
    <property type="term" value="P:defense response to Gram-negative bacterium"/>
    <property type="evidence" value="ECO:0000250"/>
    <property type="project" value="UniProtKB"/>
</dbReference>
<dbReference type="GO" id="GO:0050830">
    <property type="term" value="P:defense response to Gram-positive bacterium"/>
    <property type="evidence" value="ECO:0000250"/>
    <property type="project" value="UniProtKB"/>
</dbReference>
<dbReference type="GO" id="GO:0031640">
    <property type="term" value="P:killing of cells of another organism"/>
    <property type="evidence" value="ECO:0007669"/>
    <property type="project" value="UniProtKB-KW"/>
</dbReference>
<dbReference type="InterPro" id="IPR018802">
    <property type="entry name" value="Latarcin_precursor"/>
</dbReference>
<dbReference type="Pfam" id="PF10279">
    <property type="entry name" value="Latarcin"/>
    <property type="match status" value="1"/>
</dbReference>
<sequence>MKYFVVALALVAAFACIAESKPAESEHELAEVEEENELADLEDAVWLEHLADLSDLEEARGFFGNTWKKIKGKADKIMLKKAVKIMVKKEGITKEEAQAKVDAMSKKQIRLYLLKYYGKKALQKASEKL</sequence>
<name>CTX14_LACTA</name>